<feature type="chain" id="PRO_1000135205" description="Putative transport protein YidE">
    <location>
        <begin position="1"/>
        <end position="553"/>
    </location>
</feature>
<feature type="transmembrane region" description="Helical" evidence="1">
    <location>
        <begin position="4"/>
        <end position="24"/>
    </location>
</feature>
<feature type="transmembrane region" description="Helical" evidence="1">
    <location>
        <begin position="28"/>
        <end position="48"/>
    </location>
</feature>
<feature type="transmembrane region" description="Helical" evidence="1">
    <location>
        <begin position="65"/>
        <end position="85"/>
    </location>
</feature>
<feature type="transmembrane region" description="Helical" evidence="1">
    <location>
        <begin position="95"/>
        <end position="115"/>
    </location>
</feature>
<feature type="transmembrane region" description="Helical" evidence="1">
    <location>
        <begin position="158"/>
        <end position="178"/>
    </location>
</feature>
<feature type="transmembrane region" description="Helical" evidence="1">
    <location>
        <begin position="371"/>
        <end position="391"/>
    </location>
</feature>
<feature type="transmembrane region" description="Helical" evidence="1">
    <location>
        <begin position="393"/>
        <end position="413"/>
    </location>
</feature>
<feature type="transmembrane region" description="Helical" evidence="1">
    <location>
        <begin position="439"/>
        <end position="459"/>
    </location>
</feature>
<feature type="transmembrane region" description="Helical" evidence="1">
    <location>
        <begin position="464"/>
        <end position="484"/>
    </location>
</feature>
<feature type="transmembrane region" description="Helical" evidence="1">
    <location>
        <begin position="493"/>
        <end position="513"/>
    </location>
</feature>
<feature type="transmembrane region" description="Helical" evidence="1">
    <location>
        <begin position="533"/>
        <end position="553"/>
    </location>
</feature>
<feature type="domain" description="RCK C-terminal 1" evidence="1">
    <location>
        <begin position="191"/>
        <end position="276"/>
    </location>
</feature>
<feature type="domain" description="RCK C-terminal 2" evidence="1">
    <location>
        <begin position="279"/>
        <end position="361"/>
    </location>
</feature>
<protein>
    <recommendedName>
        <fullName evidence="1">Putative transport protein YidE</fullName>
    </recommendedName>
</protein>
<name>YIDE_ECO7I</name>
<gene>
    <name evidence="1" type="primary">yidE</name>
    <name type="ordered locus">ECIAI39_4287</name>
</gene>
<evidence type="ECO:0000255" key="1">
    <source>
        <dbReference type="HAMAP-Rule" id="MF_01016"/>
    </source>
</evidence>
<comment type="subcellular location">
    <subcellularLocation>
        <location evidence="1">Cell membrane</location>
        <topology evidence="1">Multi-pass membrane protein</topology>
    </subcellularLocation>
</comment>
<comment type="similarity">
    <text evidence="1">Belongs to the AAE transporter (TC 2.A.81) family. YidE subfamily.</text>
</comment>
<organism>
    <name type="scientific">Escherichia coli O7:K1 (strain IAI39 / ExPEC)</name>
    <dbReference type="NCBI Taxonomy" id="585057"/>
    <lineage>
        <taxon>Bacteria</taxon>
        <taxon>Pseudomonadati</taxon>
        <taxon>Pseudomonadota</taxon>
        <taxon>Gammaproteobacteria</taxon>
        <taxon>Enterobacterales</taxon>
        <taxon>Enterobacteriaceae</taxon>
        <taxon>Escherichia</taxon>
    </lineage>
</organism>
<accession>B7NQY5</accession>
<keyword id="KW-1003">Cell membrane</keyword>
<keyword id="KW-0472">Membrane</keyword>
<keyword id="KW-0677">Repeat</keyword>
<keyword id="KW-0812">Transmembrane</keyword>
<keyword id="KW-1133">Transmembrane helix</keyword>
<keyword id="KW-0813">Transport</keyword>
<dbReference type="EMBL" id="CU928164">
    <property type="protein sequence ID" value="CAR20393.1"/>
    <property type="molecule type" value="Genomic_DNA"/>
</dbReference>
<dbReference type="RefSeq" id="WP_001279763.1">
    <property type="nucleotide sequence ID" value="NC_011750.1"/>
</dbReference>
<dbReference type="RefSeq" id="YP_002410161.1">
    <property type="nucleotide sequence ID" value="NC_011750.1"/>
</dbReference>
<dbReference type="SMR" id="B7NQY5"/>
<dbReference type="STRING" id="585057.ECIAI39_4287"/>
<dbReference type="KEGG" id="ect:ECIAI39_4287"/>
<dbReference type="PATRIC" id="fig|585057.6.peg.4431"/>
<dbReference type="HOGENOM" id="CLU_035023_3_1_6"/>
<dbReference type="Proteomes" id="UP000000749">
    <property type="component" value="Chromosome"/>
</dbReference>
<dbReference type="GO" id="GO:0005886">
    <property type="term" value="C:plasma membrane"/>
    <property type="evidence" value="ECO:0007669"/>
    <property type="project" value="UniProtKB-SubCell"/>
</dbReference>
<dbReference type="GO" id="GO:0008324">
    <property type="term" value="F:monoatomic cation transmembrane transporter activity"/>
    <property type="evidence" value="ECO:0007669"/>
    <property type="project" value="InterPro"/>
</dbReference>
<dbReference type="GO" id="GO:0006813">
    <property type="term" value="P:potassium ion transport"/>
    <property type="evidence" value="ECO:0007669"/>
    <property type="project" value="InterPro"/>
</dbReference>
<dbReference type="FunFam" id="3.30.70.1450:FF:000004">
    <property type="entry name" value="Putative transport protein YidE"/>
    <property type="match status" value="1"/>
</dbReference>
<dbReference type="Gene3D" id="3.30.70.1450">
    <property type="entry name" value="Regulator of K+ conductance, C-terminal domain"/>
    <property type="match status" value="2"/>
</dbReference>
<dbReference type="HAMAP" id="MF_01016">
    <property type="entry name" value="YidE"/>
    <property type="match status" value="1"/>
</dbReference>
<dbReference type="InterPro" id="IPR050144">
    <property type="entry name" value="AAE_transporter"/>
</dbReference>
<dbReference type="InterPro" id="IPR006037">
    <property type="entry name" value="RCK_C"/>
</dbReference>
<dbReference type="InterPro" id="IPR036721">
    <property type="entry name" value="RCK_C_sf"/>
</dbReference>
<dbReference type="InterPro" id="IPR023018">
    <property type="entry name" value="Transpt_YidE_put"/>
</dbReference>
<dbReference type="InterPro" id="IPR006512">
    <property type="entry name" value="YidE_YbjL"/>
</dbReference>
<dbReference type="NCBIfam" id="NF003007">
    <property type="entry name" value="PRK03818.1"/>
    <property type="match status" value="1"/>
</dbReference>
<dbReference type="NCBIfam" id="TIGR01625">
    <property type="entry name" value="YidE_YbjL_dupl"/>
    <property type="match status" value="2"/>
</dbReference>
<dbReference type="PANTHER" id="PTHR30445">
    <property type="entry name" value="K(+)_H(+) ANTIPORTER SUBUNIT KHTT"/>
    <property type="match status" value="1"/>
</dbReference>
<dbReference type="PANTHER" id="PTHR30445:SF3">
    <property type="entry name" value="TRANSPORT PROTEIN YIDE-RELATED"/>
    <property type="match status" value="1"/>
</dbReference>
<dbReference type="Pfam" id="PF06826">
    <property type="entry name" value="Asp-Al_Ex"/>
    <property type="match status" value="2"/>
</dbReference>
<dbReference type="Pfam" id="PF02080">
    <property type="entry name" value="TrkA_C"/>
    <property type="match status" value="2"/>
</dbReference>
<dbReference type="SUPFAM" id="SSF116726">
    <property type="entry name" value="TrkA C-terminal domain-like"/>
    <property type="match status" value="2"/>
</dbReference>
<dbReference type="PROSITE" id="PS51202">
    <property type="entry name" value="RCK_C"/>
    <property type="match status" value="2"/>
</dbReference>
<sequence length="553" mass="58967">MSDIALTVSILALVAVVGLFIGNVKFRGIGLGIGGVLFGGIIVGHFVSQAGMTLSSDMLHVIQEFGLILFVYTIGIQVGPGFFASLRVSGLRLNLFAVLIVIIGGLVTAILHKLFDIPLPVVLGIFSGAVTNTPALGAGQQILRDLGTPMEMVDQMGMSYAMAYPFGICGILFTMWMLRVIFRVNVETEAQQHESSRTNGGALIRTINIRVENPNLHDLAIKDVPILNGDKIICSRLKREETLKVPSPDTIIQLGDLLHLVGQPADLHNAQLVIGQEVDTSLSTKGTDLRVERVVVTNENVLGKRIRDLHFKERYDVVISRLNRAGVELVASGDISLQFGDILNLVGRPSAIDAVANVLGNAQQKLQQVQMLPVFIGIGLGVLLGSIPVFVPGFPAALKLGLAGGPLIMALILGRIGSIGKLYWFMPPSANLALRELGIVLFLSVVGLKSGGDFVNTLVNGEGLSWIGYGALITAVPLITVGILARMLAKMNYLTMCGMLAGSMTDPPALAFANNLHPTSGAAALSYATVYPLVMFLRIITPQLLAVLFWSIG</sequence>
<reference key="1">
    <citation type="journal article" date="2009" name="PLoS Genet.">
        <title>Organised genome dynamics in the Escherichia coli species results in highly diverse adaptive paths.</title>
        <authorList>
            <person name="Touchon M."/>
            <person name="Hoede C."/>
            <person name="Tenaillon O."/>
            <person name="Barbe V."/>
            <person name="Baeriswyl S."/>
            <person name="Bidet P."/>
            <person name="Bingen E."/>
            <person name="Bonacorsi S."/>
            <person name="Bouchier C."/>
            <person name="Bouvet O."/>
            <person name="Calteau A."/>
            <person name="Chiapello H."/>
            <person name="Clermont O."/>
            <person name="Cruveiller S."/>
            <person name="Danchin A."/>
            <person name="Diard M."/>
            <person name="Dossat C."/>
            <person name="Karoui M.E."/>
            <person name="Frapy E."/>
            <person name="Garry L."/>
            <person name="Ghigo J.M."/>
            <person name="Gilles A.M."/>
            <person name="Johnson J."/>
            <person name="Le Bouguenec C."/>
            <person name="Lescat M."/>
            <person name="Mangenot S."/>
            <person name="Martinez-Jehanne V."/>
            <person name="Matic I."/>
            <person name="Nassif X."/>
            <person name="Oztas S."/>
            <person name="Petit M.A."/>
            <person name="Pichon C."/>
            <person name="Rouy Z."/>
            <person name="Ruf C.S."/>
            <person name="Schneider D."/>
            <person name="Tourret J."/>
            <person name="Vacherie B."/>
            <person name="Vallenet D."/>
            <person name="Medigue C."/>
            <person name="Rocha E.P.C."/>
            <person name="Denamur E."/>
        </authorList>
    </citation>
    <scope>NUCLEOTIDE SEQUENCE [LARGE SCALE GENOMIC DNA]</scope>
    <source>
        <strain>IAI39 / ExPEC</strain>
    </source>
</reference>
<proteinExistence type="inferred from homology"/>